<organism>
    <name type="scientific">Novosphingobium aromaticivorans (strain ATCC 700278 / DSM 12444 / CCUG 56034 / CIP 105152 / NBRC 16084 / F199)</name>
    <dbReference type="NCBI Taxonomy" id="279238"/>
    <lineage>
        <taxon>Bacteria</taxon>
        <taxon>Pseudomonadati</taxon>
        <taxon>Pseudomonadota</taxon>
        <taxon>Alphaproteobacteria</taxon>
        <taxon>Sphingomonadales</taxon>
        <taxon>Sphingomonadaceae</taxon>
        <taxon>Novosphingobium</taxon>
    </lineage>
</organism>
<feature type="chain" id="PRO_0000253135" description="Putative membrane protein insertion efficiency factor">
    <location>
        <begin position="1"/>
        <end position="69"/>
    </location>
</feature>
<proteinExistence type="inferred from homology"/>
<evidence type="ECO:0000255" key="1">
    <source>
        <dbReference type="HAMAP-Rule" id="MF_00386"/>
    </source>
</evidence>
<comment type="function">
    <text evidence="1">Could be involved in insertion of integral membrane proteins into the membrane.</text>
</comment>
<comment type="subcellular location">
    <subcellularLocation>
        <location evidence="1">Cell inner membrane</location>
        <topology evidence="1">Peripheral membrane protein</topology>
        <orientation evidence="1">Cytoplasmic side</orientation>
    </subcellularLocation>
</comment>
<comment type="similarity">
    <text evidence="1">Belongs to the UPF0161 family.</text>
</comment>
<protein>
    <recommendedName>
        <fullName evidence="1">Putative membrane protein insertion efficiency factor</fullName>
    </recommendedName>
</protein>
<name>YIDD_NOVAD</name>
<accession>Q2GAU9</accession>
<dbReference type="EMBL" id="CP000248">
    <property type="protein sequence ID" value="ABD25024.1"/>
    <property type="molecule type" value="Genomic_DNA"/>
</dbReference>
<dbReference type="RefSeq" id="WP_011444238.1">
    <property type="nucleotide sequence ID" value="NC_007794.1"/>
</dbReference>
<dbReference type="STRING" id="279238.Saro_0577"/>
<dbReference type="KEGG" id="nar:Saro_0577"/>
<dbReference type="eggNOG" id="COG0759">
    <property type="taxonomic scope" value="Bacteria"/>
</dbReference>
<dbReference type="HOGENOM" id="CLU_144811_6_1_5"/>
<dbReference type="Proteomes" id="UP000009134">
    <property type="component" value="Chromosome"/>
</dbReference>
<dbReference type="GO" id="GO:0005886">
    <property type="term" value="C:plasma membrane"/>
    <property type="evidence" value="ECO:0007669"/>
    <property type="project" value="UniProtKB-SubCell"/>
</dbReference>
<dbReference type="HAMAP" id="MF_00386">
    <property type="entry name" value="UPF0161_YidD"/>
    <property type="match status" value="1"/>
</dbReference>
<dbReference type="InterPro" id="IPR002696">
    <property type="entry name" value="Membr_insert_effic_factor_YidD"/>
</dbReference>
<dbReference type="NCBIfam" id="TIGR00278">
    <property type="entry name" value="membrane protein insertion efficiency factor YidD"/>
    <property type="match status" value="1"/>
</dbReference>
<dbReference type="PANTHER" id="PTHR33383">
    <property type="entry name" value="MEMBRANE PROTEIN INSERTION EFFICIENCY FACTOR-RELATED"/>
    <property type="match status" value="1"/>
</dbReference>
<dbReference type="PANTHER" id="PTHR33383:SF1">
    <property type="entry name" value="MEMBRANE PROTEIN INSERTION EFFICIENCY FACTOR-RELATED"/>
    <property type="match status" value="1"/>
</dbReference>
<dbReference type="Pfam" id="PF01809">
    <property type="entry name" value="YidD"/>
    <property type="match status" value="1"/>
</dbReference>
<dbReference type="SMART" id="SM01234">
    <property type="entry name" value="Haemolytic"/>
    <property type="match status" value="1"/>
</dbReference>
<gene>
    <name type="ordered locus">Saro_0577</name>
</gene>
<reference key="1">
    <citation type="submission" date="2006-01" db="EMBL/GenBank/DDBJ databases">
        <title>Complete sequence of Novosphingobium aromaticivorans DSM 12444.</title>
        <authorList>
            <consortium name="US DOE Joint Genome Institute"/>
            <person name="Copeland A."/>
            <person name="Lucas S."/>
            <person name="Lapidus A."/>
            <person name="Barry K."/>
            <person name="Detter J.C."/>
            <person name="Glavina T."/>
            <person name="Hammon N."/>
            <person name="Israni S."/>
            <person name="Pitluck S."/>
            <person name="Chain P."/>
            <person name="Malfatti S."/>
            <person name="Shin M."/>
            <person name="Vergez L."/>
            <person name="Schmutz J."/>
            <person name="Larimer F."/>
            <person name="Land M."/>
            <person name="Kyrpides N."/>
            <person name="Ivanova N."/>
            <person name="Fredrickson J."/>
            <person name="Balkwill D."/>
            <person name="Romine M.F."/>
            <person name="Richardson P."/>
        </authorList>
    </citation>
    <scope>NUCLEOTIDE SEQUENCE [LARGE SCALE GENOMIC DNA]</scope>
    <source>
        <strain>ATCC 700278 / DSM 12444 / CCUG 56034 / CIP 105152 / NBRC 16084 / F199</strain>
    </source>
</reference>
<sequence length="69" mass="7679">MKRLLILIARAWQLGPSRVLPPSCRYSPSCSQYAIEALEKHGAIKGGWLAAKRLLRCHPWGGHGYDPVP</sequence>
<keyword id="KW-0997">Cell inner membrane</keyword>
<keyword id="KW-1003">Cell membrane</keyword>
<keyword id="KW-0472">Membrane</keyword>
<keyword id="KW-1185">Reference proteome</keyword>